<feature type="chain" id="PRO_1000133424" description="Light-independent protochlorophyllide reductase subunit B">
    <location>
        <begin position="1"/>
        <end position="508"/>
    </location>
</feature>
<feature type="active site" description="Proton donor" evidence="1">
    <location>
        <position position="282"/>
    </location>
</feature>
<feature type="binding site" evidence="1">
    <location>
        <position position="36"/>
    </location>
    <ligand>
        <name>[4Fe-4S] cluster</name>
        <dbReference type="ChEBI" id="CHEBI:49883"/>
        <note>ligand shared with heterodimeric partner</note>
    </ligand>
</feature>
<feature type="binding site" evidence="1">
    <location>
        <begin position="417"/>
        <end position="418"/>
    </location>
    <ligand>
        <name>substrate</name>
    </ligand>
</feature>
<organism>
    <name type="scientific">Methylocella silvestris (strain DSM 15510 / CIP 108128 / LMG 27833 / NCIMB 13906 / BL2)</name>
    <dbReference type="NCBI Taxonomy" id="395965"/>
    <lineage>
        <taxon>Bacteria</taxon>
        <taxon>Pseudomonadati</taxon>
        <taxon>Pseudomonadota</taxon>
        <taxon>Alphaproteobacteria</taxon>
        <taxon>Hyphomicrobiales</taxon>
        <taxon>Beijerinckiaceae</taxon>
        <taxon>Methylocella</taxon>
    </lineage>
</organism>
<protein>
    <recommendedName>
        <fullName evidence="1">Light-independent protochlorophyllide reductase subunit B</fullName>
        <shortName evidence="1">DPOR subunit B</shortName>
        <shortName evidence="1">LI-POR subunit B</shortName>
        <ecNumber evidence="1">1.3.7.7</ecNumber>
    </recommendedName>
</protein>
<proteinExistence type="inferred from homology"/>
<accession>B8EPX7</accession>
<evidence type="ECO:0000255" key="1">
    <source>
        <dbReference type="HAMAP-Rule" id="MF_00353"/>
    </source>
</evidence>
<reference key="1">
    <citation type="journal article" date="2010" name="J. Bacteriol.">
        <title>Complete genome sequence of the aerobic facultative methanotroph Methylocella silvestris BL2.</title>
        <authorList>
            <person name="Chen Y."/>
            <person name="Crombie A."/>
            <person name="Rahman M.T."/>
            <person name="Dedysh S.N."/>
            <person name="Liesack W."/>
            <person name="Stott M.B."/>
            <person name="Alam M."/>
            <person name="Theisen A.R."/>
            <person name="Murrell J.C."/>
            <person name="Dunfield P.F."/>
        </authorList>
    </citation>
    <scope>NUCLEOTIDE SEQUENCE [LARGE SCALE GENOMIC DNA]</scope>
    <source>
        <strain>DSM 15510 / CIP 108128 / LMG 27833 / NCIMB 13906 / BL2</strain>
    </source>
</reference>
<keyword id="KW-0004">4Fe-4S</keyword>
<keyword id="KW-0067">ATP-binding</keyword>
<keyword id="KW-0077">Bacteriochlorophyll biosynthesis</keyword>
<keyword id="KW-0149">Chlorophyll biosynthesis</keyword>
<keyword id="KW-0408">Iron</keyword>
<keyword id="KW-0411">Iron-sulfur</keyword>
<keyword id="KW-0479">Metal-binding</keyword>
<keyword id="KW-0547">Nucleotide-binding</keyword>
<keyword id="KW-0560">Oxidoreductase</keyword>
<keyword id="KW-0602">Photosynthesis</keyword>
<keyword id="KW-1185">Reference proteome</keyword>
<sequence>MQLTLWTYEGPPHVGAMRVAAAMKDVHYVLHAPQGDTYADLLFTMIERRESRPPVTYTTFEARDLGGDTAALFQRTAQEAYERFKPKALLVGSSCTAELIQDDPGGLARGLGLPVPVIPLEFSAYQRKENFGASLTFYNLVRAFAKALATPRATRSAARPSCNLLGATALGFRHRDDIREVTLLLDRLGVGVNICAPLGASPDDLARLPEADFNIVLYPEVALEAAEWLKRTHRQPLVKTQPIGVGATHAFIEEVARLAGLDPRPLLGPAESRLEWYSRSVDSTYLTGKRVFIFGDATHAIAAARVASRELGFTVAGLGSYSREFAREMRAAAALYSLNALITDDYLEVEAEIERLQPELVLGTQMERHIAKRLGIPCAVISAPVHVQDFPARHSPQMVFEGANVIFDSWVHPLMMGLEEHLLTMFRGDEEFHDEAAPSHLGVAVATAQATHTPAILAWDAGAERELKSIPFFVRGKARRNTERYAQERGLPLITIETLYDAKAHYSR</sequence>
<dbReference type="EC" id="1.3.7.7" evidence="1"/>
<dbReference type="EMBL" id="CP001280">
    <property type="protein sequence ID" value="ACK50981.1"/>
    <property type="molecule type" value="Genomic_DNA"/>
</dbReference>
<dbReference type="RefSeq" id="WP_012591051.1">
    <property type="nucleotide sequence ID" value="NC_011666.1"/>
</dbReference>
<dbReference type="SMR" id="B8EPX7"/>
<dbReference type="STRING" id="395965.Msil_2041"/>
<dbReference type="KEGG" id="msl:Msil_2041"/>
<dbReference type="eggNOG" id="COG2710">
    <property type="taxonomic scope" value="Bacteria"/>
</dbReference>
<dbReference type="HOGENOM" id="CLU_025470_0_0_5"/>
<dbReference type="OrthoDB" id="5717231at2"/>
<dbReference type="UniPathway" id="UPA00671"/>
<dbReference type="Proteomes" id="UP000002257">
    <property type="component" value="Chromosome"/>
</dbReference>
<dbReference type="GO" id="GO:0051539">
    <property type="term" value="F:4 iron, 4 sulfur cluster binding"/>
    <property type="evidence" value="ECO:0007669"/>
    <property type="project" value="UniProtKB-UniRule"/>
</dbReference>
<dbReference type="GO" id="GO:0005524">
    <property type="term" value="F:ATP binding"/>
    <property type="evidence" value="ECO:0007669"/>
    <property type="project" value="UniProtKB-UniRule"/>
</dbReference>
<dbReference type="GO" id="GO:0046872">
    <property type="term" value="F:metal ion binding"/>
    <property type="evidence" value="ECO:0007669"/>
    <property type="project" value="UniProtKB-KW"/>
</dbReference>
<dbReference type="GO" id="GO:0016730">
    <property type="term" value="F:oxidoreductase activity, acting on iron-sulfur proteins as donors"/>
    <property type="evidence" value="ECO:0007669"/>
    <property type="project" value="InterPro"/>
</dbReference>
<dbReference type="GO" id="GO:0016636">
    <property type="term" value="F:oxidoreductase activity, acting on the CH-CH group of donors, iron-sulfur protein as acceptor"/>
    <property type="evidence" value="ECO:0007669"/>
    <property type="project" value="UniProtKB-UniRule"/>
</dbReference>
<dbReference type="GO" id="GO:0036070">
    <property type="term" value="P:light-independent bacteriochlorophyll biosynthetic process"/>
    <property type="evidence" value="ECO:0007669"/>
    <property type="project" value="UniProtKB-UniRule"/>
</dbReference>
<dbReference type="GO" id="GO:0019685">
    <property type="term" value="P:photosynthesis, dark reaction"/>
    <property type="evidence" value="ECO:0007669"/>
    <property type="project" value="InterPro"/>
</dbReference>
<dbReference type="Gene3D" id="1.20.89.20">
    <property type="match status" value="1"/>
</dbReference>
<dbReference type="Gene3D" id="3.40.50.1980">
    <property type="entry name" value="Nitrogenase molybdenum iron protein domain"/>
    <property type="match status" value="3"/>
</dbReference>
<dbReference type="Gene3D" id="1.10.8.550">
    <property type="entry name" value="Proto-chlorophyllide reductase 57 kD subunit B"/>
    <property type="match status" value="1"/>
</dbReference>
<dbReference type="HAMAP" id="MF_00353">
    <property type="entry name" value="ChlB_BchB"/>
    <property type="match status" value="1"/>
</dbReference>
<dbReference type="InterPro" id="IPR050152">
    <property type="entry name" value="ChlB/BchB/BchZ"/>
</dbReference>
<dbReference type="InterPro" id="IPR013580">
    <property type="entry name" value="LI-POR_suB-like_C"/>
</dbReference>
<dbReference type="InterPro" id="IPR000510">
    <property type="entry name" value="Nase/OxRdtase_comp1"/>
</dbReference>
<dbReference type="InterPro" id="IPR042298">
    <property type="entry name" value="P-CP_red_C"/>
</dbReference>
<dbReference type="InterPro" id="IPR005969">
    <property type="entry name" value="Protochl_reductB"/>
</dbReference>
<dbReference type="InterPro" id="IPR016209">
    <property type="entry name" value="Protochlorophyllide_Rdtase"/>
</dbReference>
<dbReference type="NCBIfam" id="TIGR01278">
    <property type="entry name" value="DPOR_BchB"/>
    <property type="match status" value="1"/>
</dbReference>
<dbReference type="PANTHER" id="PTHR33712">
    <property type="entry name" value="LIGHT-INDEPENDENT PROTOCHLOROPHYLLIDE REDUCTASE SUBUNIT B"/>
    <property type="match status" value="1"/>
</dbReference>
<dbReference type="PANTHER" id="PTHR33712:SF7">
    <property type="entry name" value="LIGHT-INDEPENDENT PROTOCHLOROPHYLLIDE REDUCTASE SUBUNIT B"/>
    <property type="match status" value="1"/>
</dbReference>
<dbReference type="Pfam" id="PF00148">
    <property type="entry name" value="Oxidored_nitro"/>
    <property type="match status" value="1"/>
</dbReference>
<dbReference type="Pfam" id="PF08369">
    <property type="entry name" value="PCP_red"/>
    <property type="match status" value="1"/>
</dbReference>
<dbReference type="PIRSF" id="PIRSF000163">
    <property type="entry name" value="PCP_ChlB"/>
    <property type="match status" value="1"/>
</dbReference>
<dbReference type="SUPFAM" id="SSF53807">
    <property type="entry name" value="Helical backbone' metal receptor"/>
    <property type="match status" value="1"/>
</dbReference>
<gene>
    <name evidence="1" type="primary">bchB</name>
    <name type="ordered locus">Msil_2041</name>
</gene>
<name>BCHB_METSB</name>
<comment type="function">
    <text evidence="1">Component of the dark-operative protochlorophyllide reductase (DPOR) that uses Mg-ATP and reduced ferredoxin to reduce ring D of protochlorophyllide (Pchlide) to form chlorophyllide a (Chlide). This reaction is light-independent. The NB-protein (BchN-BchB) is the catalytic component of the complex.</text>
</comment>
<comment type="catalytic activity">
    <reaction evidence="1">
        <text>chlorophyllide a + oxidized 2[4Fe-4S]-[ferredoxin] + 2 ADP + 2 phosphate = protochlorophyllide a + reduced 2[4Fe-4S]-[ferredoxin] + 2 ATP + 2 H2O</text>
        <dbReference type="Rhea" id="RHEA:28202"/>
        <dbReference type="Rhea" id="RHEA-COMP:10002"/>
        <dbReference type="Rhea" id="RHEA-COMP:10004"/>
        <dbReference type="ChEBI" id="CHEBI:15377"/>
        <dbReference type="ChEBI" id="CHEBI:30616"/>
        <dbReference type="ChEBI" id="CHEBI:33722"/>
        <dbReference type="ChEBI" id="CHEBI:33723"/>
        <dbReference type="ChEBI" id="CHEBI:43474"/>
        <dbReference type="ChEBI" id="CHEBI:83348"/>
        <dbReference type="ChEBI" id="CHEBI:83350"/>
        <dbReference type="ChEBI" id="CHEBI:456216"/>
        <dbReference type="EC" id="1.3.7.7"/>
    </reaction>
</comment>
<comment type="cofactor">
    <cofactor evidence="1">
        <name>[4Fe-4S] cluster</name>
        <dbReference type="ChEBI" id="CHEBI:49883"/>
    </cofactor>
    <text evidence="1">Binds 1 [4Fe-4S] cluster per heterodimer. The cluster is bound at the heterodimer interface by residues from both subunits.</text>
</comment>
<comment type="pathway">
    <text evidence="1">Porphyrin-containing compound metabolism; bacteriochlorophyll biosynthesis (light-independent).</text>
</comment>
<comment type="subunit">
    <text evidence="1">Protochlorophyllide reductase is composed of three subunits; BchL, BchN and BchB. Forms a heterotetramer of two BchB and two BchN subunits.</text>
</comment>
<comment type="similarity">
    <text evidence="1">Belongs to the ChlB/BchB/BchZ family.</text>
</comment>